<gene>
    <name evidence="1" type="primary">dxr</name>
    <name type="ordered locus">DVU_0866</name>
</gene>
<accession>Q72DR3</accession>
<protein>
    <recommendedName>
        <fullName evidence="1">1-deoxy-D-xylulose 5-phosphate reductoisomerase</fullName>
        <shortName evidence="1">DXP reductoisomerase</shortName>
        <ecNumber evidence="1">1.1.1.267</ecNumber>
    </recommendedName>
    <alternativeName>
        <fullName evidence="1">1-deoxyxylulose-5-phosphate reductoisomerase</fullName>
    </alternativeName>
    <alternativeName>
        <fullName evidence="1">2-C-methyl-D-erythritol 4-phosphate synthase</fullName>
    </alternativeName>
</protein>
<name>DXR_NITV2</name>
<reference key="1">
    <citation type="journal article" date="2004" name="Nat. Biotechnol.">
        <title>The genome sequence of the anaerobic, sulfate-reducing bacterium Desulfovibrio vulgaris Hildenborough.</title>
        <authorList>
            <person name="Heidelberg J.F."/>
            <person name="Seshadri R."/>
            <person name="Haveman S.A."/>
            <person name="Hemme C.L."/>
            <person name="Paulsen I.T."/>
            <person name="Kolonay J.F."/>
            <person name="Eisen J.A."/>
            <person name="Ward N.L."/>
            <person name="Methe B.A."/>
            <person name="Brinkac L.M."/>
            <person name="Daugherty S.C."/>
            <person name="DeBoy R.T."/>
            <person name="Dodson R.J."/>
            <person name="Durkin A.S."/>
            <person name="Madupu R."/>
            <person name="Nelson W.C."/>
            <person name="Sullivan S.A."/>
            <person name="Fouts D.E."/>
            <person name="Haft D.H."/>
            <person name="Selengut J."/>
            <person name="Peterson J.D."/>
            <person name="Davidsen T.M."/>
            <person name="Zafar N."/>
            <person name="Zhou L."/>
            <person name="Radune D."/>
            <person name="Dimitrov G."/>
            <person name="Hance M."/>
            <person name="Tran K."/>
            <person name="Khouri H.M."/>
            <person name="Gill J."/>
            <person name="Utterback T.R."/>
            <person name="Feldblyum T.V."/>
            <person name="Wall J.D."/>
            <person name="Voordouw G."/>
            <person name="Fraser C.M."/>
        </authorList>
    </citation>
    <scope>NUCLEOTIDE SEQUENCE [LARGE SCALE GENOMIC DNA]</scope>
    <source>
        <strain>ATCC 29579 / DSM 644 / CCUG 34227 / NCIMB 8303 / VKM B-1760 / Hildenborough</strain>
    </source>
</reference>
<feature type="chain" id="PRO_0000163647" description="1-deoxy-D-xylulose 5-phosphate reductoisomerase">
    <location>
        <begin position="1"/>
        <end position="408"/>
    </location>
</feature>
<feature type="binding site" evidence="1">
    <location>
        <position position="27"/>
    </location>
    <ligand>
        <name>NADPH</name>
        <dbReference type="ChEBI" id="CHEBI:57783"/>
    </ligand>
</feature>
<feature type="binding site" evidence="1">
    <location>
        <position position="28"/>
    </location>
    <ligand>
        <name>NADPH</name>
        <dbReference type="ChEBI" id="CHEBI:57783"/>
    </ligand>
</feature>
<feature type="binding site" evidence="1">
    <location>
        <position position="29"/>
    </location>
    <ligand>
        <name>NADPH</name>
        <dbReference type="ChEBI" id="CHEBI:57783"/>
    </ligand>
</feature>
<feature type="binding site" evidence="1">
    <location>
        <position position="30"/>
    </location>
    <ligand>
        <name>NADPH</name>
        <dbReference type="ChEBI" id="CHEBI:57783"/>
    </ligand>
</feature>
<feature type="binding site" evidence="1">
    <location>
        <position position="53"/>
    </location>
    <ligand>
        <name>NADPH</name>
        <dbReference type="ChEBI" id="CHEBI:57783"/>
    </ligand>
</feature>
<feature type="binding site" evidence="1">
    <location>
        <position position="54"/>
    </location>
    <ligand>
        <name>NADPH</name>
        <dbReference type="ChEBI" id="CHEBI:57783"/>
    </ligand>
</feature>
<feature type="binding site" evidence="1">
    <location>
        <position position="55"/>
    </location>
    <ligand>
        <name>NADPH</name>
        <dbReference type="ChEBI" id="CHEBI:57783"/>
    </ligand>
</feature>
<feature type="binding site" evidence="1">
    <location>
        <position position="140"/>
    </location>
    <ligand>
        <name>NADPH</name>
        <dbReference type="ChEBI" id="CHEBI:57783"/>
    </ligand>
</feature>
<feature type="binding site" evidence="1">
    <location>
        <position position="141"/>
    </location>
    <ligand>
        <name>1-deoxy-D-xylulose 5-phosphate</name>
        <dbReference type="ChEBI" id="CHEBI:57792"/>
    </ligand>
</feature>
<feature type="binding site" evidence="1">
    <location>
        <position position="142"/>
    </location>
    <ligand>
        <name>NADPH</name>
        <dbReference type="ChEBI" id="CHEBI:57783"/>
    </ligand>
</feature>
<feature type="binding site" evidence="1">
    <location>
        <position position="166"/>
    </location>
    <ligand>
        <name>Mn(2+)</name>
        <dbReference type="ChEBI" id="CHEBI:29035"/>
    </ligand>
</feature>
<feature type="binding site" evidence="1">
    <location>
        <position position="167"/>
    </location>
    <ligand>
        <name>1-deoxy-D-xylulose 5-phosphate</name>
        <dbReference type="ChEBI" id="CHEBI:57792"/>
    </ligand>
</feature>
<feature type="binding site" evidence="1">
    <location>
        <position position="168"/>
    </location>
    <ligand>
        <name>1-deoxy-D-xylulose 5-phosphate</name>
        <dbReference type="ChEBI" id="CHEBI:57792"/>
    </ligand>
</feature>
<feature type="binding site" evidence="1">
    <location>
        <position position="168"/>
    </location>
    <ligand>
        <name>Mn(2+)</name>
        <dbReference type="ChEBI" id="CHEBI:29035"/>
    </ligand>
</feature>
<feature type="binding site" evidence="1">
    <location>
        <position position="192"/>
    </location>
    <ligand>
        <name>1-deoxy-D-xylulose 5-phosphate</name>
        <dbReference type="ChEBI" id="CHEBI:57792"/>
    </ligand>
</feature>
<feature type="binding site" evidence="1">
    <location>
        <position position="215"/>
    </location>
    <ligand>
        <name>1-deoxy-D-xylulose 5-phosphate</name>
        <dbReference type="ChEBI" id="CHEBI:57792"/>
    </ligand>
</feature>
<feature type="binding site" evidence="1">
    <location>
        <position position="221"/>
    </location>
    <ligand>
        <name>NADPH</name>
        <dbReference type="ChEBI" id="CHEBI:57783"/>
    </ligand>
</feature>
<feature type="binding site" evidence="1">
    <location>
        <position position="228"/>
    </location>
    <ligand>
        <name>1-deoxy-D-xylulose 5-phosphate</name>
        <dbReference type="ChEBI" id="CHEBI:57792"/>
    </ligand>
</feature>
<feature type="binding site" evidence="1">
    <location>
        <position position="233"/>
    </location>
    <ligand>
        <name>1-deoxy-D-xylulose 5-phosphate</name>
        <dbReference type="ChEBI" id="CHEBI:57792"/>
    </ligand>
</feature>
<feature type="binding site" evidence="1">
    <location>
        <position position="234"/>
    </location>
    <ligand>
        <name>1-deoxy-D-xylulose 5-phosphate</name>
        <dbReference type="ChEBI" id="CHEBI:57792"/>
    </ligand>
</feature>
<feature type="binding site" evidence="1">
    <location>
        <position position="237"/>
    </location>
    <ligand>
        <name>1-deoxy-D-xylulose 5-phosphate</name>
        <dbReference type="ChEBI" id="CHEBI:57792"/>
    </ligand>
</feature>
<feature type="binding site" evidence="1">
    <location>
        <position position="237"/>
    </location>
    <ligand>
        <name>Mn(2+)</name>
        <dbReference type="ChEBI" id="CHEBI:29035"/>
    </ligand>
</feature>
<proteinExistence type="inferred from homology"/>
<keyword id="KW-0414">Isoprene biosynthesis</keyword>
<keyword id="KW-0464">Manganese</keyword>
<keyword id="KW-0479">Metal-binding</keyword>
<keyword id="KW-0521">NADP</keyword>
<keyword id="KW-0560">Oxidoreductase</keyword>
<keyword id="KW-1185">Reference proteome</keyword>
<sequence>MIRYISAMPSPEWEHETPRTLALLGSTGSIGTSALRVVEAHPHRFKVVALAGARNVEKLAAQAARWRPEHLGVLDATGAAKLRDLLPAGYAPHIHIGPEGYATMATLPEAGTVLSAQVGAAGLRATEAAARHGKVICLANKESLVLAGDIIRRHCAGSGAVILPVDSEHNAIFQALQGHDPASVRRIILTASGGPFRGRSRDDLAAVSCRDALAHPNWNMGAKISIDSATLMNKGLEVIEACHLYGVGIDDVGVVVHPQSIVHSLVEYEDGSQIAHLGTPDMRIAIAYCLTWPGVVDAGVPRLDLVKAGSLTFEEPDLHSFPCLELARRAYREGRGMPVVLNAANEVAVSLFLSDRIRFLDIPDIIARALDMHDGTTPHDIEGIEALDEATRRTVYERAGHSNTDGMA</sequence>
<evidence type="ECO:0000255" key="1">
    <source>
        <dbReference type="HAMAP-Rule" id="MF_00183"/>
    </source>
</evidence>
<comment type="function">
    <text evidence="1">Catalyzes the NADPH-dependent rearrangement and reduction of 1-deoxy-D-xylulose-5-phosphate (DXP) to 2-C-methyl-D-erythritol 4-phosphate (MEP).</text>
</comment>
<comment type="catalytic activity">
    <reaction evidence="1">
        <text>2-C-methyl-D-erythritol 4-phosphate + NADP(+) = 1-deoxy-D-xylulose 5-phosphate + NADPH + H(+)</text>
        <dbReference type="Rhea" id="RHEA:13717"/>
        <dbReference type="ChEBI" id="CHEBI:15378"/>
        <dbReference type="ChEBI" id="CHEBI:57783"/>
        <dbReference type="ChEBI" id="CHEBI:57792"/>
        <dbReference type="ChEBI" id="CHEBI:58262"/>
        <dbReference type="ChEBI" id="CHEBI:58349"/>
        <dbReference type="EC" id="1.1.1.267"/>
    </reaction>
    <physiologicalReaction direction="right-to-left" evidence="1">
        <dbReference type="Rhea" id="RHEA:13719"/>
    </physiologicalReaction>
</comment>
<comment type="cofactor">
    <cofactor evidence="1">
        <name>Mg(2+)</name>
        <dbReference type="ChEBI" id="CHEBI:18420"/>
    </cofactor>
    <cofactor evidence="1">
        <name>Mn(2+)</name>
        <dbReference type="ChEBI" id="CHEBI:29035"/>
    </cofactor>
</comment>
<comment type="pathway">
    <text evidence="1">Isoprenoid biosynthesis; isopentenyl diphosphate biosynthesis via DXP pathway; isopentenyl diphosphate from 1-deoxy-D-xylulose 5-phosphate: step 1/6.</text>
</comment>
<comment type="similarity">
    <text evidence="1">Belongs to the DXR family.</text>
</comment>
<organism>
    <name type="scientific">Nitratidesulfovibrio vulgaris (strain ATCC 29579 / DSM 644 / CCUG 34227 / NCIMB 8303 / VKM B-1760 / Hildenborough)</name>
    <name type="common">Desulfovibrio vulgaris</name>
    <dbReference type="NCBI Taxonomy" id="882"/>
    <lineage>
        <taxon>Bacteria</taxon>
        <taxon>Pseudomonadati</taxon>
        <taxon>Thermodesulfobacteriota</taxon>
        <taxon>Desulfovibrionia</taxon>
        <taxon>Desulfovibrionales</taxon>
        <taxon>Desulfovibrionaceae</taxon>
        <taxon>Nitratidesulfovibrio</taxon>
    </lineage>
</organism>
<dbReference type="EC" id="1.1.1.267" evidence="1"/>
<dbReference type="EMBL" id="AE017285">
    <property type="protein sequence ID" value="AAS95346.1"/>
    <property type="molecule type" value="Genomic_DNA"/>
</dbReference>
<dbReference type="RefSeq" id="WP_010938165.1">
    <property type="nucleotide sequence ID" value="NC_002937.3"/>
</dbReference>
<dbReference type="RefSeq" id="YP_010087.1">
    <property type="nucleotide sequence ID" value="NC_002937.3"/>
</dbReference>
<dbReference type="SMR" id="Q72DR3"/>
<dbReference type="IntAct" id="Q72DR3">
    <property type="interactions" value="1"/>
</dbReference>
<dbReference type="STRING" id="882.DVU_0866"/>
<dbReference type="PaxDb" id="882-DVU_0866"/>
<dbReference type="EnsemblBacteria" id="AAS95346">
    <property type="protein sequence ID" value="AAS95346"/>
    <property type="gene ID" value="DVU_0866"/>
</dbReference>
<dbReference type="KEGG" id="dvu:DVU_0866"/>
<dbReference type="PATRIC" id="fig|882.5.peg.811"/>
<dbReference type="eggNOG" id="COG0743">
    <property type="taxonomic scope" value="Bacteria"/>
</dbReference>
<dbReference type="HOGENOM" id="CLU_035714_0_0_7"/>
<dbReference type="OrthoDB" id="9806546at2"/>
<dbReference type="PhylomeDB" id="Q72DR3"/>
<dbReference type="UniPathway" id="UPA00056">
    <property type="reaction ID" value="UER00092"/>
</dbReference>
<dbReference type="Proteomes" id="UP000002194">
    <property type="component" value="Chromosome"/>
</dbReference>
<dbReference type="GO" id="GO:0030604">
    <property type="term" value="F:1-deoxy-D-xylulose-5-phosphate reductoisomerase activity"/>
    <property type="evidence" value="ECO:0007669"/>
    <property type="project" value="UniProtKB-UniRule"/>
</dbReference>
<dbReference type="GO" id="GO:0030145">
    <property type="term" value="F:manganese ion binding"/>
    <property type="evidence" value="ECO:0007669"/>
    <property type="project" value="TreeGrafter"/>
</dbReference>
<dbReference type="GO" id="GO:0070402">
    <property type="term" value="F:NADPH binding"/>
    <property type="evidence" value="ECO:0007669"/>
    <property type="project" value="InterPro"/>
</dbReference>
<dbReference type="GO" id="GO:0051484">
    <property type="term" value="P:isopentenyl diphosphate biosynthetic process, methylerythritol 4-phosphate pathway involved in terpenoid biosynthetic process"/>
    <property type="evidence" value="ECO:0007669"/>
    <property type="project" value="TreeGrafter"/>
</dbReference>
<dbReference type="FunFam" id="3.40.50.720:FF:000045">
    <property type="entry name" value="1-deoxy-D-xylulose 5-phosphate reductoisomerase"/>
    <property type="match status" value="1"/>
</dbReference>
<dbReference type="Gene3D" id="1.10.1740.10">
    <property type="match status" value="1"/>
</dbReference>
<dbReference type="Gene3D" id="3.40.50.720">
    <property type="entry name" value="NAD(P)-binding Rossmann-like Domain"/>
    <property type="match status" value="1"/>
</dbReference>
<dbReference type="HAMAP" id="MF_00183">
    <property type="entry name" value="DXP_reductoisom"/>
    <property type="match status" value="1"/>
</dbReference>
<dbReference type="InterPro" id="IPR003821">
    <property type="entry name" value="DXP_reductoisomerase"/>
</dbReference>
<dbReference type="InterPro" id="IPR013644">
    <property type="entry name" value="DXP_reductoisomerase_C"/>
</dbReference>
<dbReference type="InterPro" id="IPR013512">
    <property type="entry name" value="DXP_reductoisomerase_N"/>
</dbReference>
<dbReference type="InterPro" id="IPR026877">
    <property type="entry name" value="DXPR_C"/>
</dbReference>
<dbReference type="InterPro" id="IPR036169">
    <property type="entry name" value="DXPR_C_sf"/>
</dbReference>
<dbReference type="InterPro" id="IPR036291">
    <property type="entry name" value="NAD(P)-bd_dom_sf"/>
</dbReference>
<dbReference type="NCBIfam" id="TIGR00243">
    <property type="entry name" value="Dxr"/>
    <property type="match status" value="1"/>
</dbReference>
<dbReference type="PANTHER" id="PTHR30525">
    <property type="entry name" value="1-DEOXY-D-XYLULOSE 5-PHOSPHATE REDUCTOISOMERASE"/>
    <property type="match status" value="1"/>
</dbReference>
<dbReference type="PANTHER" id="PTHR30525:SF0">
    <property type="entry name" value="1-DEOXY-D-XYLULOSE 5-PHOSPHATE REDUCTOISOMERASE, CHLOROPLASTIC"/>
    <property type="match status" value="1"/>
</dbReference>
<dbReference type="Pfam" id="PF08436">
    <property type="entry name" value="DXP_redisom_C"/>
    <property type="match status" value="1"/>
</dbReference>
<dbReference type="Pfam" id="PF02670">
    <property type="entry name" value="DXP_reductoisom"/>
    <property type="match status" value="1"/>
</dbReference>
<dbReference type="Pfam" id="PF13288">
    <property type="entry name" value="DXPR_C"/>
    <property type="match status" value="1"/>
</dbReference>
<dbReference type="PIRSF" id="PIRSF006205">
    <property type="entry name" value="Dxp_reductismrs"/>
    <property type="match status" value="1"/>
</dbReference>
<dbReference type="SUPFAM" id="SSF69055">
    <property type="entry name" value="1-deoxy-D-xylulose-5-phosphate reductoisomerase, C-terminal domain"/>
    <property type="match status" value="1"/>
</dbReference>
<dbReference type="SUPFAM" id="SSF55347">
    <property type="entry name" value="Glyceraldehyde-3-phosphate dehydrogenase-like, C-terminal domain"/>
    <property type="match status" value="1"/>
</dbReference>
<dbReference type="SUPFAM" id="SSF51735">
    <property type="entry name" value="NAD(P)-binding Rossmann-fold domains"/>
    <property type="match status" value="1"/>
</dbReference>